<name>RS9_HALHL</name>
<feature type="chain" id="PRO_1000051231" description="Small ribosomal subunit protein uS9">
    <location>
        <begin position="1"/>
        <end position="130"/>
    </location>
</feature>
<accession>A1WYS8</accession>
<sequence>MANQQYYGTGRRKTSAARVFMTPGNGNITVNGRPLDEYFGRETGRMIVRQALEQVDAGDKFDIKATVSGGGSSGQAGAVRHGIARALANYDAELKAPLRRAGFITRDARMVERKKIGLHKARRATQFSKR</sequence>
<protein>
    <recommendedName>
        <fullName evidence="1">Small ribosomal subunit protein uS9</fullName>
    </recommendedName>
    <alternativeName>
        <fullName evidence="2">30S ribosomal protein S9</fullName>
    </alternativeName>
</protein>
<organism>
    <name type="scientific">Halorhodospira halophila (strain DSM 244 / SL1)</name>
    <name type="common">Ectothiorhodospira halophila (strain DSM 244 / SL1)</name>
    <dbReference type="NCBI Taxonomy" id="349124"/>
    <lineage>
        <taxon>Bacteria</taxon>
        <taxon>Pseudomonadati</taxon>
        <taxon>Pseudomonadota</taxon>
        <taxon>Gammaproteobacteria</taxon>
        <taxon>Chromatiales</taxon>
        <taxon>Ectothiorhodospiraceae</taxon>
        <taxon>Halorhodospira</taxon>
    </lineage>
</organism>
<comment type="similarity">
    <text evidence="1">Belongs to the universal ribosomal protein uS9 family.</text>
</comment>
<evidence type="ECO:0000255" key="1">
    <source>
        <dbReference type="HAMAP-Rule" id="MF_00532"/>
    </source>
</evidence>
<evidence type="ECO:0000305" key="2"/>
<proteinExistence type="inferred from homology"/>
<keyword id="KW-1185">Reference proteome</keyword>
<keyword id="KW-0687">Ribonucleoprotein</keyword>
<keyword id="KW-0689">Ribosomal protein</keyword>
<gene>
    <name evidence="1" type="primary">rpsI</name>
    <name type="ordered locus">Hhal_2076</name>
</gene>
<dbReference type="EMBL" id="CP000544">
    <property type="protein sequence ID" value="ABM62840.1"/>
    <property type="molecule type" value="Genomic_DNA"/>
</dbReference>
<dbReference type="RefSeq" id="WP_011814862.1">
    <property type="nucleotide sequence ID" value="NC_008789.1"/>
</dbReference>
<dbReference type="SMR" id="A1WYS8"/>
<dbReference type="STRING" id="349124.Hhal_2076"/>
<dbReference type="KEGG" id="hha:Hhal_2076"/>
<dbReference type="eggNOG" id="COG0103">
    <property type="taxonomic scope" value="Bacteria"/>
</dbReference>
<dbReference type="HOGENOM" id="CLU_046483_2_1_6"/>
<dbReference type="OrthoDB" id="9803965at2"/>
<dbReference type="Proteomes" id="UP000000647">
    <property type="component" value="Chromosome"/>
</dbReference>
<dbReference type="GO" id="GO:0022627">
    <property type="term" value="C:cytosolic small ribosomal subunit"/>
    <property type="evidence" value="ECO:0007669"/>
    <property type="project" value="TreeGrafter"/>
</dbReference>
<dbReference type="GO" id="GO:0003723">
    <property type="term" value="F:RNA binding"/>
    <property type="evidence" value="ECO:0007669"/>
    <property type="project" value="TreeGrafter"/>
</dbReference>
<dbReference type="GO" id="GO:0003735">
    <property type="term" value="F:structural constituent of ribosome"/>
    <property type="evidence" value="ECO:0007669"/>
    <property type="project" value="InterPro"/>
</dbReference>
<dbReference type="GO" id="GO:0006412">
    <property type="term" value="P:translation"/>
    <property type="evidence" value="ECO:0007669"/>
    <property type="project" value="UniProtKB-UniRule"/>
</dbReference>
<dbReference type="FunFam" id="3.30.230.10:FF:000001">
    <property type="entry name" value="30S ribosomal protein S9"/>
    <property type="match status" value="1"/>
</dbReference>
<dbReference type="Gene3D" id="3.30.230.10">
    <property type="match status" value="1"/>
</dbReference>
<dbReference type="HAMAP" id="MF_00532_B">
    <property type="entry name" value="Ribosomal_uS9_B"/>
    <property type="match status" value="1"/>
</dbReference>
<dbReference type="InterPro" id="IPR020568">
    <property type="entry name" value="Ribosomal_Su5_D2-typ_SF"/>
</dbReference>
<dbReference type="InterPro" id="IPR000754">
    <property type="entry name" value="Ribosomal_uS9"/>
</dbReference>
<dbReference type="InterPro" id="IPR023035">
    <property type="entry name" value="Ribosomal_uS9_bac/plastid"/>
</dbReference>
<dbReference type="InterPro" id="IPR020574">
    <property type="entry name" value="Ribosomal_uS9_CS"/>
</dbReference>
<dbReference type="InterPro" id="IPR014721">
    <property type="entry name" value="Ribsml_uS5_D2-typ_fold_subgr"/>
</dbReference>
<dbReference type="NCBIfam" id="NF001099">
    <property type="entry name" value="PRK00132.1"/>
    <property type="match status" value="1"/>
</dbReference>
<dbReference type="PANTHER" id="PTHR21569">
    <property type="entry name" value="RIBOSOMAL PROTEIN S9"/>
    <property type="match status" value="1"/>
</dbReference>
<dbReference type="PANTHER" id="PTHR21569:SF1">
    <property type="entry name" value="SMALL RIBOSOMAL SUBUNIT PROTEIN US9M"/>
    <property type="match status" value="1"/>
</dbReference>
<dbReference type="Pfam" id="PF00380">
    <property type="entry name" value="Ribosomal_S9"/>
    <property type="match status" value="1"/>
</dbReference>
<dbReference type="SUPFAM" id="SSF54211">
    <property type="entry name" value="Ribosomal protein S5 domain 2-like"/>
    <property type="match status" value="1"/>
</dbReference>
<dbReference type="PROSITE" id="PS00360">
    <property type="entry name" value="RIBOSOMAL_S9"/>
    <property type="match status" value="1"/>
</dbReference>
<reference key="1">
    <citation type="submission" date="2006-12" db="EMBL/GenBank/DDBJ databases">
        <title>Complete sequence of Halorhodospira halophila SL1.</title>
        <authorList>
            <consortium name="US DOE Joint Genome Institute"/>
            <person name="Copeland A."/>
            <person name="Lucas S."/>
            <person name="Lapidus A."/>
            <person name="Barry K."/>
            <person name="Detter J.C."/>
            <person name="Glavina del Rio T."/>
            <person name="Hammon N."/>
            <person name="Israni S."/>
            <person name="Dalin E."/>
            <person name="Tice H."/>
            <person name="Pitluck S."/>
            <person name="Saunders E."/>
            <person name="Brettin T."/>
            <person name="Bruce D."/>
            <person name="Han C."/>
            <person name="Tapia R."/>
            <person name="Schmutz J."/>
            <person name="Larimer F."/>
            <person name="Land M."/>
            <person name="Hauser L."/>
            <person name="Kyrpides N."/>
            <person name="Mikhailova N."/>
            <person name="Hoff W."/>
            <person name="Richardson P."/>
        </authorList>
    </citation>
    <scope>NUCLEOTIDE SEQUENCE [LARGE SCALE GENOMIC DNA]</scope>
    <source>
        <strain>DSM 244 / SL1</strain>
    </source>
</reference>